<protein>
    <recommendedName>
        <fullName>Cofilin-5</fullName>
    </recommendedName>
</protein>
<accession>Q86IX3</accession>
<accession>Q556A0</accession>
<gene>
    <name type="primary">cofF</name>
    <name type="ORF">DDB_G0274589</name>
</gene>
<proteinExistence type="inferred from homology"/>
<organism>
    <name type="scientific">Dictyostelium discoideum</name>
    <name type="common">Social amoeba</name>
    <dbReference type="NCBI Taxonomy" id="44689"/>
    <lineage>
        <taxon>Eukaryota</taxon>
        <taxon>Amoebozoa</taxon>
        <taxon>Evosea</taxon>
        <taxon>Eumycetozoa</taxon>
        <taxon>Dictyostelia</taxon>
        <taxon>Dictyosteliales</taxon>
        <taxon>Dictyosteliaceae</taxon>
        <taxon>Dictyostelium</taxon>
    </lineage>
</organism>
<keyword id="KW-0009">Actin-binding</keyword>
<keyword id="KW-0963">Cytoplasm</keyword>
<keyword id="KW-0206">Cytoskeleton</keyword>
<keyword id="KW-1185">Reference proteome</keyword>
<reference key="1">
    <citation type="journal article" date="2002" name="Nature">
        <title>Sequence and analysis of chromosome 2 of Dictyostelium discoideum.</title>
        <authorList>
            <person name="Gloeckner G."/>
            <person name="Eichinger L."/>
            <person name="Szafranski K."/>
            <person name="Pachebat J.A."/>
            <person name="Bankier A.T."/>
            <person name="Dear P.H."/>
            <person name="Lehmann R."/>
            <person name="Baumgart C."/>
            <person name="Parra G."/>
            <person name="Abril J.F."/>
            <person name="Guigo R."/>
            <person name="Kumpf K."/>
            <person name="Tunggal B."/>
            <person name="Cox E.C."/>
            <person name="Quail M.A."/>
            <person name="Platzer M."/>
            <person name="Rosenthal A."/>
            <person name="Noegel A.A."/>
        </authorList>
    </citation>
    <scope>NUCLEOTIDE SEQUENCE [LARGE SCALE GENOMIC DNA]</scope>
    <source>
        <strain>AX4</strain>
    </source>
</reference>
<reference key="2">
    <citation type="journal article" date="2005" name="Nature">
        <title>The genome of the social amoeba Dictyostelium discoideum.</title>
        <authorList>
            <person name="Eichinger L."/>
            <person name="Pachebat J.A."/>
            <person name="Gloeckner G."/>
            <person name="Rajandream M.A."/>
            <person name="Sucgang R."/>
            <person name="Berriman M."/>
            <person name="Song J."/>
            <person name="Olsen R."/>
            <person name="Szafranski K."/>
            <person name="Xu Q."/>
            <person name="Tunggal B."/>
            <person name="Kummerfeld S."/>
            <person name="Madera M."/>
            <person name="Konfortov B.A."/>
            <person name="Rivero F."/>
            <person name="Bankier A.T."/>
            <person name="Lehmann R."/>
            <person name="Hamlin N."/>
            <person name="Davies R."/>
            <person name="Gaudet P."/>
            <person name="Fey P."/>
            <person name="Pilcher K."/>
            <person name="Chen G."/>
            <person name="Saunders D."/>
            <person name="Sodergren E.J."/>
            <person name="Davis P."/>
            <person name="Kerhornou A."/>
            <person name="Nie X."/>
            <person name="Hall N."/>
            <person name="Anjard C."/>
            <person name="Hemphill L."/>
            <person name="Bason N."/>
            <person name="Farbrother P."/>
            <person name="Desany B."/>
            <person name="Just E."/>
            <person name="Morio T."/>
            <person name="Rost R."/>
            <person name="Churcher C.M."/>
            <person name="Cooper J."/>
            <person name="Haydock S."/>
            <person name="van Driessche N."/>
            <person name="Cronin A."/>
            <person name="Goodhead I."/>
            <person name="Muzny D.M."/>
            <person name="Mourier T."/>
            <person name="Pain A."/>
            <person name="Lu M."/>
            <person name="Harper D."/>
            <person name="Lindsay R."/>
            <person name="Hauser H."/>
            <person name="James K.D."/>
            <person name="Quiles M."/>
            <person name="Madan Babu M."/>
            <person name="Saito T."/>
            <person name="Buchrieser C."/>
            <person name="Wardroper A."/>
            <person name="Felder M."/>
            <person name="Thangavelu M."/>
            <person name="Johnson D."/>
            <person name="Knights A."/>
            <person name="Loulseged H."/>
            <person name="Mungall K.L."/>
            <person name="Oliver K."/>
            <person name="Price C."/>
            <person name="Quail M.A."/>
            <person name="Urushihara H."/>
            <person name="Hernandez J."/>
            <person name="Rabbinowitsch E."/>
            <person name="Steffen D."/>
            <person name="Sanders M."/>
            <person name="Ma J."/>
            <person name="Kohara Y."/>
            <person name="Sharp S."/>
            <person name="Simmonds M.N."/>
            <person name="Spiegler S."/>
            <person name="Tivey A."/>
            <person name="Sugano S."/>
            <person name="White B."/>
            <person name="Walker D."/>
            <person name="Woodward J.R."/>
            <person name="Winckler T."/>
            <person name="Tanaka Y."/>
            <person name="Shaulsky G."/>
            <person name="Schleicher M."/>
            <person name="Weinstock G.M."/>
            <person name="Rosenthal A."/>
            <person name="Cox E.C."/>
            <person name="Chisholm R.L."/>
            <person name="Gibbs R.A."/>
            <person name="Loomis W.F."/>
            <person name="Platzer M."/>
            <person name="Kay R.R."/>
            <person name="Williams J.G."/>
            <person name="Dear P.H."/>
            <person name="Noegel A.A."/>
            <person name="Barrell B.G."/>
            <person name="Kuspa A."/>
        </authorList>
    </citation>
    <scope>NUCLEOTIDE SEQUENCE [LARGE SCALE GENOMIC DNA]</scope>
    <source>
        <strain>AX4</strain>
    </source>
</reference>
<sequence>MESRIIEIDPNCVNEFEKLKKKYKIESIFLKLNDNFNLLYVEKTLSKISQDDFLESIPVDQPRLIIYKKYSNNKIIFIRWIPEIVQDTIEYSYSNASTAILELLIGINEYMEVKDLIQLSNL</sequence>
<evidence type="ECO:0000250" key="1"/>
<evidence type="ECO:0000255" key="2">
    <source>
        <dbReference type="PROSITE-ProRule" id="PRU00599"/>
    </source>
</evidence>
<evidence type="ECO:0000305" key="3"/>
<feature type="chain" id="PRO_0000365599" description="Cofilin-5">
    <location>
        <begin position="1"/>
        <end position="122"/>
    </location>
</feature>
<feature type="domain" description="ADF-H" evidence="2">
    <location>
        <begin position="3"/>
        <end position="122"/>
    </location>
</feature>
<name>COF5_DICDI</name>
<comment type="function">
    <text evidence="1">Controls actin polymerization and depolymerization.</text>
</comment>
<comment type="subcellular location">
    <subcellularLocation>
        <location evidence="1">Cytoplasm</location>
        <location evidence="1">Cytoskeleton</location>
    </subcellularLocation>
</comment>
<comment type="similarity">
    <text evidence="3">Belongs to the actin-binding proteins ADF family.</text>
</comment>
<dbReference type="EMBL" id="AAFI02000012">
    <property type="protein sequence ID" value="EAL70187.1"/>
    <property type="molecule type" value="Genomic_DNA"/>
</dbReference>
<dbReference type="RefSeq" id="XP_643910.1">
    <property type="nucleotide sequence ID" value="XM_638818.1"/>
</dbReference>
<dbReference type="SMR" id="Q86IX3"/>
<dbReference type="FunCoup" id="Q86IX3">
    <property type="interactions" value="1"/>
</dbReference>
<dbReference type="STRING" id="44689.Q86IX3"/>
<dbReference type="PaxDb" id="44689-DDB0232100"/>
<dbReference type="EnsemblProtists" id="EAL70187">
    <property type="protein sequence ID" value="EAL70187"/>
    <property type="gene ID" value="DDB_G0274589"/>
</dbReference>
<dbReference type="GeneID" id="8619337"/>
<dbReference type="KEGG" id="ddi:DDB_G0274589"/>
<dbReference type="dictyBase" id="DDB_G0274589">
    <property type="gene designation" value="cofF"/>
</dbReference>
<dbReference type="VEuPathDB" id="AmoebaDB:DDB_G0274589"/>
<dbReference type="HOGENOM" id="CLU_2031035_0_0_1"/>
<dbReference type="InParanoid" id="Q86IX3"/>
<dbReference type="PhylomeDB" id="Q86IX3"/>
<dbReference type="PRO" id="PR:Q86IX3"/>
<dbReference type="Proteomes" id="UP000002195">
    <property type="component" value="Chromosome 2"/>
</dbReference>
<dbReference type="GO" id="GO:0015629">
    <property type="term" value="C:actin cytoskeleton"/>
    <property type="evidence" value="ECO:0000250"/>
    <property type="project" value="dictyBase"/>
</dbReference>
<dbReference type="GO" id="GO:0005737">
    <property type="term" value="C:cytoplasm"/>
    <property type="evidence" value="ECO:0000318"/>
    <property type="project" value="GO_Central"/>
</dbReference>
<dbReference type="GO" id="GO:0051015">
    <property type="term" value="F:actin filament binding"/>
    <property type="evidence" value="ECO:0000318"/>
    <property type="project" value="GO_Central"/>
</dbReference>
<dbReference type="GO" id="GO:0030042">
    <property type="term" value="P:actin filament depolymerization"/>
    <property type="evidence" value="ECO:0000318"/>
    <property type="project" value="GO_Central"/>
</dbReference>
<dbReference type="GO" id="GO:0051014">
    <property type="term" value="P:actin filament severing"/>
    <property type="evidence" value="ECO:0000318"/>
    <property type="project" value="GO_Central"/>
</dbReference>
<dbReference type="Gene3D" id="3.40.20.10">
    <property type="entry name" value="Severin"/>
    <property type="match status" value="1"/>
</dbReference>
<dbReference type="InterPro" id="IPR002108">
    <property type="entry name" value="ADF-H"/>
</dbReference>
<dbReference type="InterPro" id="IPR029006">
    <property type="entry name" value="ADF-H/Gelsolin-like_dom_sf"/>
</dbReference>
<dbReference type="Pfam" id="PF00241">
    <property type="entry name" value="Cofilin_ADF"/>
    <property type="match status" value="1"/>
</dbReference>
<dbReference type="SUPFAM" id="SSF55753">
    <property type="entry name" value="Actin depolymerizing proteins"/>
    <property type="match status" value="1"/>
</dbReference>
<dbReference type="PROSITE" id="PS51263">
    <property type="entry name" value="ADF_H"/>
    <property type="match status" value="1"/>
</dbReference>